<reference key="1">
    <citation type="journal article" date="1993" name="EMBO J.">
        <title>Molecular genetic analysis of a locus required for resistance to antimicrobial peptides in Salmonella typhimurium.</title>
        <authorList>
            <person name="Parra-Lopez C."/>
            <person name="Baer M.T."/>
            <person name="Groisman E.A."/>
        </authorList>
    </citation>
    <scope>NUCLEOTIDE SEQUENCE [GENOMIC DNA]</scope>
    <scope>FUNCTION</scope>
    <scope>OPERON STRUCTURE</scope>
    <source>
        <strain>ATCC 14028s / SGSG 2262</strain>
    </source>
</reference>
<reference key="2">
    <citation type="journal article" date="2001" name="Nature">
        <title>Complete genome sequence of Salmonella enterica serovar Typhimurium LT2.</title>
        <authorList>
            <person name="McClelland M."/>
            <person name="Sanderson K.E."/>
            <person name="Spieth J."/>
            <person name="Clifton S.W."/>
            <person name="Latreille P."/>
            <person name="Courtney L."/>
            <person name="Porwollik S."/>
            <person name="Ali J."/>
            <person name="Dante M."/>
            <person name="Du F."/>
            <person name="Hou S."/>
            <person name="Layman D."/>
            <person name="Leonard S."/>
            <person name="Nguyen C."/>
            <person name="Scott K."/>
            <person name="Holmes A."/>
            <person name="Grewal N."/>
            <person name="Mulvaney E."/>
            <person name="Ryan E."/>
            <person name="Sun H."/>
            <person name="Florea L."/>
            <person name="Miller W."/>
            <person name="Stoneking T."/>
            <person name="Nhan M."/>
            <person name="Waterston R."/>
            <person name="Wilson R.K."/>
        </authorList>
    </citation>
    <scope>NUCLEOTIDE SEQUENCE [LARGE SCALE GENOMIC DNA]</scope>
    <source>
        <strain>LT2 / SGSC1412 / ATCC 700720</strain>
    </source>
</reference>
<proteinExistence type="evidence at transcript level"/>
<sequence>MIIFTLRRLLLLLVTLFFLTFIGFSLSYFTPHAPLQGASLWNAWVFWFNGLLHWDFGVSSINGQLISEQLKEVFPATMELCILAFGFALMVGIPVGMLAGVTRSKWPDRFISALALLGFSIPVFWLALLLTLFFSLTLGWLPVSGRFDLLYEVKPVTGFAIIDAWISDSPWRDEMVMSAIRHMVLPVLTLSVAPTTEVIRLMRISTIEVYDQNYVKAAATRGLSRFTILRRHVLHNALPPVIPRLGLQFSTMLTLAMITEMVFSWPGLGRWLIHAIRQQDYAAISAGVMVIGSLVIVVNVISDILGAMANPLKHKEWYALR</sequence>
<name>SAPB_SALTY</name>
<evidence type="ECO:0000250" key="1"/>
<evidence type="ECO:0000255" key="2"/>
<evidence type="ECO:0000255" key="3">
    <source>
        <dbReference type="PROSITE-ProRule" id="PRU00441"/>
    </source>
</evidence>
<evidence type="ECO:0000269" key="4">
    <source>
    </source>
</evidence>
<evidence type="ECO:0000303" key="5">
    <source>
    </source>
</evidence>
<evidence type="ECO:0000305" key="6"/>
<organism>
    <name type="scientific">Salmonella typhimurium (strain LT2 / SGSC1412 / ATCC 700720)</name>
    <dbReference type="NCBI Taxonomy" id="99287"/>
    <lineage>
        <taxon>Bacteria</taxon>
        <taxon>Pseudomonadati</taxon>
        <taxon>Pseudomonadota</taxon>
        <taxon>Gammaproteobacteria</taxon>
        <taxon>Enterobacterales</taxon>
        <taxon>Enterobacteriaceae</taxon>
        <taxon>Salmonella</taxon>
    </lineage>
</organism>
<dbReference type="EMBL" id="X74212">
    <property type="protein sequence ID" value="CAA52285.1"/>
    <property type="molecule type" value="Genomic_DNA"/>
</dbReference>
<dbReference type="EMBL" id="AE006468">
    <property type="protein sequence ID" value="AAL20610.1"/>
    <property type="molecule type" value="Genomic_DNA"/>
</dbReference>
<dbReference type="PIR" id="S39586">
    <property type="entry name" value="S39586"/>
</dbReference>
<dbReference type="RefSeq" id="NP_460651.1">
    <property type="nucleotide sequence ID" value="NC_003197.2"/>
</dbReference>
<dbReference type="RefSeq" id="WP_000583298.1">
    <property type="nucleotide sequence ID" value="NC_003197.2"/>
</dbReference>
<dbReference type="SMR" id="P0A2J3"/>
<dbReference type="STRING" id="99287.STM1693"/>
<dbReference type="TCDB" id="3.A.1.5.5">
    <property type="family name" value="the atp-binding cassette (abc) superfamily"/>
</dbReference>
<dbReference type="PaxDb" id="99287-STM1693"/>
<dbReference type="GeneID" id="1253211"/>
<dbReference type="KEGG" id="stm:STM1693"/>
<dbReference type="PATRIC" id="fig|99287.12.peg.1787"/>
<dbReference type="HOGENOM" id="CLU_036879_0_3_6"/>
<dbReference type="OMA" id="WRHEMIV"/>
<dbReference type="PhylomeDB" id="P0A2J3"/>
<dbReference type="BioCyc" id="SENT99287:STM1693-MONOMER"/>
<dbReference type="Proteomes" id="UP000001014">
    <property type="component" value="Chromosome"/>
</dbReference>
<dbReference type="GO" id="GO:0005886">
    <property type="term" value="C:plasma membrane"/>
    <property type="evidence" value="ECO:0007669"/>
    <property type="project" value="UniProtKB-SubCell"/>
</dbReference>
<dbReference type="GO" id="GO:0071916">
    <property type="term" value="F:dipeptide transmembrane transporter activity"/>
    <property type="evidence" value="ECO:0000318"/>
    <property type="project" value="GO_Central"/>
</dbReference>
<dbReference type="GO" id="GO:0015031">
    <property type="term" value="P:protein transport"/>
    <property type="evidence" value="ECO:0007669"/>
    <property type="project" value="UniProtKB-KW"/>
</dbReference>
<dbReference type="CDD" id="cd06261">
    <property type="entry name" value="TM_PBP2"/>
    <property type="match status" value="1"/>
</dbReference>
<dbReference type="Gene3D" id="1.10.3720.10">
    <property type="entry name" value="MetI-like"/>
    <property type="match status" value="1"/>
</dbReference>
<dbReference type="InterPro" id="IPR000515">
    <property type="entry name" value="MetI-like"/>
</dbReference>
<dbReference type="InterPro" id="IPR035906">
    <property type="entry name" value="MetI-like_sf"/>
</dbReference>
<dbReference type="NCBIfam" id="NF011690">
    <property type="entry name" value="PRK15110.1"/>
    <property type="match status" value="1"/>
</dbReference>
<dbReference type="PANTHER" id="PTHR43163">
    <property type="entry name" value="DIPEPTIDE TRANSPORT SYSTEM PERMEASE PROTEIN DPPB-RELATED"/>
    <property type="match status" value="1"/>
</dbReference>
<dbReference type="PANTHER" id="PTHR43163:SF4">
    <property type="entry name" value="PUTRESCINE EXPORT SYSTEM PERMEASE PROTEIN SAPB"/>
    <property type="match status" value="1"/>
</dbReference>
<dbReference type="Pfam" id="PF00528">
    <property type="entry name" value="BPD_transp_1"/>
    <property type="match status" value="1"/>
</dbReference>
<dbReference type="SUPFAM" id="SSF161098">
    <property type="entry name" value="MetI-like"/>
    <property type="match status" value="1"/>
</dbReference>
<dbReference type="PROSITE" id="PS50928">
    <property type="entry name" value="ABC_TM1"/>
    <property type="match status" value="1"/>
</dbReference>
<comment type="function">
    <text evidence="4">Involved in a peptide intake transport system that plays a role in the resistance to antimicrobial peptides.</text>
</comment>
<comment type="subcellular location">
    <subcellularLocation>
        <location evidence="1">Cell inner membrane</location>
        <topology evidence="3">Multi-pass membrane protein</topology>
    </subcellularLocation>
</comment>
<comment type="induction">
    <text evidence="4">Part of the sapA-sapB-sapC-sapD-sapF operon, RNA detected in mid-log phase cells.</text>
</comment>
<comment type="similarity">
    <text evidence="6">Belongs to the binding-protein-dependent transport system permease family. OppBC subfamily.</text>
</comment>
<protein>
    <recommendedName>
        <fullName>Peptide transport system permease protein SapB</fullName>
    </recommendedName>
</protein>
<gene>
    <name evidence="5" type="primary">sapB</name>
    <name type="ordered locus">STM1693</name>
</gene>
<accession>P0A2J3</accession>
<accession>P36668</accession>
<feature type="chain" id="PRO_0000060161" description="Peptide transport system permease protein SapB">
    <location>
        <begin position="1"/>
        <end position="321"/>
    </location>
</feature>
<feature type="topological domain" description="Cytoplasmic" evidence="2">
    <location>
        <begin position="1"/>
        <end position="8"/>
    </location>
</feature>
<feature type="transmembrane region" description="Helical" evidence="3">
    <location>
        <begin position="9"/>
        <end position="29"/>
    </location>
</feature>
<feature type="topological domain" description="Periplasmic" evidence="2">
    <location>
        <begin position="30"/>
        <end position="80"/>
    </location>
</feature>
<feature type="transmembrane region" description="Helical" evidence="3">
    <location>
        <begin position="81"/>
        <end position="101"/>
    </location>
</feature>
<feature type="topological domain" description="Cytoplasmic" evidence="2">
    <location>
        <begin position="102"/>
        <end position="113"/>
    </location>
</feature>
<feature type="transmembrane region" description="Helical" evidence="3">
    <location>
        <begin position="114"/>
        <end position="134"/>
    </location>
</feature>
<feature type="topological domain" description="Periplasmic" evidence="2">
    <location>
        <begin position="135"/>
        <end position="174"/>
    </location>
</feature>
<feature type="transmembrane region" description="Helical" evidence="3">
    <location>
        <begin position="175"/>
        <end position="195"/>
    </location>
</feature>
<feature type="topological domain" description="Cytoplasmic" evidence="2">
    <location>
        <begin position="196"/>
        <end position="248"/>
    </location>
</feature>
<feature type="transmembrane region" description="Helical" evidence="3">
    <location>
        <begin position="249"/>
        <end position="269"/>
    </location>
</feature>
<feature type="topological domain" description="Periplasmic" evidence="2">
    <location>
        <begin position="270"/>
        <end position="280"/>
    </location>
</feature>
<feature type="transmembrane region" description="Helical" evidence="3">
    <location>
        <begin position="281"/>
        <end position="301"/>
    </location>
</feature>
<feature type="topological domain" description="Cytoplasmic" evidence="2">
    <location>
        <begin position="302"/>
        <end position="321"/>
    </location>
</feature>
<feature type="domain" description="ABC transmembrane type-1" evidence="3">
    <location>
        <begin position="74"/>
        <end position="302"/>
    </location>
</feature>
<feature type="sequence conflict" description="In Ref. 1; CAA52285." evidence="6" ref="1">
    <original>ML</original>
    <variation>TV</variation>
    <location>
        <begin position="97"/>
        <end position="98"/>
    </location>
</feature>
<feature type="sequence conflict" description="In Ref. 1; CAA52285." evidence="6" ref="1">
    <original>S</original>
    <variation>C</variation>
    <location>
        <position position="169"/>
    </location>
</feature>
<keyword id="KW-0997">Cell inner membrane</keyword>
<keyword id="KW-1003">Cell membrane</keyword>
<keyword id="KW-0472">Membrane</keyword>
<keyword id="KW-0571">Peptide transport</keyword>
<keyword id="KW-0653">Protein transport</keyword>
<keyword id="KW-1185">Reference proteome</keyword>
<keyword id="KW-0812">Transmembrane</keyword>
<keyword id="KW-1133">Transmembrane helix</keyword>
<keyword id="KW-0813">Transport</keyword>